<organism>
    <name type="scientific">Vibrio parahaemolyticus serotype O3:K6 (strain RIMD 2210633)</name>
    <dbReference type="NCBI Taxonomy" id="223926"/>
    <lineage>
        <taxon>Bacteria</taxon>
        <taxon>Pseudomonadati</taxon>
        <taxon>Pseudomonadota</taxon>
        <taxon>Gammaproteobacteria</taxon>
        <taxon>Vibrionales</taxon>
        <taxon>Vibrionaceae</taxon>
        <taxon>Vibrio</taxon>
    </lineage>
</organism>
<reference key="1">
    <citation type="journal article" date="2003" name="Lancet">
        <title>Genome sequence of Vibrio parahaemolyticus: a pathogenic mechanism distinct from that of V. cholerae.</title>
        <authorList>
            <person name="Makino K."/>
            <person name="Oshima K."/>
            <person name="Kurokawa K."/>
            <person name="Yokoyama K."/>
            <person name="Uda T."/>
            <person name="Tagomori K."/>
            <person name="Iijima Y."/>
            <person name="Najima M."/>
            <person name="Nakano M."/>
            <person name="Yamashita A."/>
            <person name="Kubota Y."/>
            <person name="Kimura S."/>
            <person name="Yasunaga T."/>
            <person name="Honda T."/>
            <person name="Shinagawa H."/>
            <person name="Hattori M."/>
            <person name="Iida T."/>
        </authorList>
    </citation>
    <scope>NUCLEOTIDE SEQUENCE [LARGE SCALE GENOMIC DNA]</scope>
    <source>
        <strain>RIMD 2210633</strain>
    </source>
</reference>
<keyword id="KW-0687">Ribonucleoprotein</keyword>
<keyword id="KW-0689">Ribosomal protein</keyword>
<keyword id="KW-0694">RNA-binding</keyword>
<keyword id="KW-0699">rRNA-binding</keyword>
<accession>Q87T08</accession>
<gene>
    <name evidence="1" type="primary">rplV</name>
    <name type="ordered locus">VP0262</name>
</gene>
<dbReference type="EMBL" id="BA000031">
    <property type="protein sequence ID" value="BAC58525.1"/>
    <property type="molecule type" value="Genomic_DNA"/>
</dbReference>
<dbReference type="RefSeq" id="NP_796641.1">
    <property type="nucleotide sequence ID" value="NC_004603.1"/>
</dbReference>
<dbReference type="RefSeq" id="WP_005383164.1">
    <property type="nucleotide sequence ID" value="NC_004603.1"/>
</dbReference>
<dbReference type="SMR" id="Q87T08"/>
<dbReference type="GeneID" id="83583118"/>
<dbReference type="KEGG" id="vpa:VP0262"/>
<dbReference type="PATRIC" id="fig|223926.6.peg.253"/>
<dbReference type="eggNOG" id="COG0091">
    <property type="taxonomic scope" value="Bacteria"/>
</dbReference>
<dbReference type="HOGENOM" id="CLU_083987_3_3_6"/>
<dbReference type="Proteomes" id="UP000002493">
    <property type="component" value="Chromosome 1"/>
</dbReference>
<dbReference type="GO" id="GO:0022625">
    <property type="term" value="C:cytosolic large ribosomal subunit"/>
    <property type="evidence" value="ECO:0007669"/>
    <property type="project" value="TreeGrafter"/>
</dbReference>
<dbReference type="GO" id="GO:0019843">
    <property type="term" value="F:rRNA binding"/>
    <property type="evidence" value="ECO:0007669"/>
    <property type="project" value="UniProtKB-UniRule"/>
</dbReference>
<dbReference type="GO" id="GO:0003735">
    <property type="term" value="F:structural constituent of ribosome"/>
    <property type="evidence" value="ECO:0007669"/>
    <property type="project" value="InterPro"/>
</dbReference>
<dbReference type="GO" id="GO:0006412">
    <property type="term" value="P:translation"/>
    <property type="evidence" value="ECO:0007669"/>
    <property type="project" value="UniProtKB-UniRule"/>
</dbReference>
<dbReference type="CDD" id="cd00336">
    <property type="entry name" value="Ribosomal_L22"/>
    <property type="match status" value="1"/>
</dbReference>
<dbReference type="FunFam" id="3.90.470.10:FF:000001">
    <property type="entry name" value="50S ribosomal protein L22"/>
    <property type="match status" value="1"/>
</dbReference>
<dbReference type="Gene3D" id="3.90.470.10">
    <property type="entry name" value="Ribosomal protein L22/L17"/>
    <property type="match status" value="1"/>
</dbReference>
<dbReference type="HAMAP" id="MF_01331_B">
    <property type="entry name" value="Ribosomal_uL22_B"/>
    <property type="match status" value="1"/>
</dbReference>
<dbReference type="InterPro" id="IPR001063">
    <property type="entry name" value="Ribosomal_uL22"/>
</dbReference>
<dbReference type="InterPro" id="IPR005727">
    <property type="entry name" value="Ribosomal_uL22_bac/chlpt-type"/>
</dbReference>
<dbReference type="InterPro" id="IPR047867">
    <property type="entry name" value="Ribosomal_uL22_bac/org-type"/>
</dbReference>
<dbReference type="InterPro" id="IPR018260">
    <property type="entry name" value="Ribosomal_uL22_CS"/>
</dbReference>
<dbReference type="InterPro" id="IPR036394">
    <property type="entry name" value="Ribosomal_uL22_sf"/>
</dbReference>
<dbReference type="NCBIfam" id="TIGR01044">
    <property type="entry name" value="rplV_bact"/>
    <property type="match status" value="1"/>
</dbReference>
<dbReference type="PANTHER" id="PTHR13501">
    <property type="entry name" value="CHLOROPLAST 50S RIBOSOMAL PROTEIN L22-RELATED"/>
    <property type="match status" value="1"/>
</dbReference>
<dbReference type="PANTHER" id="PTHR13501:SF8">
    <property type="entry name" value="LARGE RIBOSOMAL SUBUNIT PROTEIN UL22M"/>
    <property type="match status" value="1"/>
</dbReference>
<dbReference type="Pfam" id="PF00237">
    <property type="entry name" value="Ribosomal_L22"/>
    <property type="match status" value="1"/>
</dbReference>
<dbReference type="SUPFAM" id="SSF54843">
    <property type="entry name" value="Ribosomal protein L22"/>
    <property type="match status" value="1"/>
</dbReference>
<dbReference type="PROSITE" id="PS00464">
    <property type="entry name" value="RIBOSOMAL_L22"/>
    <property type="match status" value="1"/>
</dbReference>
<sequence>MEAIAKHNFARISPQKARLVADLIRGKSVDQALEILTFSNKKAAALVKKVLESAIANAEHNEGADIDDLNVAKIFVDEGPTMKRIMPRAKGRADRILKRSSHITVVVADR</sequence>
<evidence type="ECO:0000255" key="1">
    <source>
        <dbReference type="HAMAP-Rule" id="MF_01331"/>
    </source>
</evidence>
<evidence type="ECO:0000305" key="2"/>
<proteinExistence type="inferred from homology"/>
<feature type="chain" id="PRO_0000125259" description="Large ribosomal subunit protein uL22">
    <location>
        <begin position="1"/>
        <end position="110"/>
    </location>
</feature>
<protein>
    <recommendedName>
        <fullName evidence="1">Large ribosomal subunit protein uL22</fullName>
    </recommendedName>
    <alternativeName>
        <fullName evidence="2">50S ribosomal protein L22</fullName>
    </alternativeName>
</protein>
<comment type="function">
    <text evidence="1">This protein binds specifically to 23S rRNA; its binding is stimulated by other ribosomal proteins, e.g. L4, L17, and L20. It is important during the early stages of 50S assembly. It makes multiple contacts with different domains of the 23S rRNA in the assembled 50S subunit and ribosome (By similarity).</text>
</comment>
<comment type="function">
    <text evidence="1">The globular domain of the protein is located near the polypeptide exit tunnel on the outside of the subunit, while an extended beta-hairpin is found that lines the wall of the exit tunnel in the center of the 70S ribosome.</text>
</comment>
<comment type="subunit">
    <text evidence="1">Part of the 50S ribosomal subunit.</text>
</comment>
<comment type="similarity">
    <text evidence="1">Belongs to the universal ribosomal protein uL22 family.</text>
</comment>
<name>RL22_VIBPA</name>